<protein>
    <recommendedName>
        <fullName>Antibacterial protein PR-39</fullName>
    </recommendedName>
</protein>
<feature type="signal peptide" evidence="3">
    <location>
        <begin position="1"/>
        <end position="29"/>
    </location>
</feature>
<feature type="propeptide" id="PRO_0000004730" evidence="5 7">
    <location>
        <begin position="30"/>
        <end position="130"/>
    </location>
</feature>
<feature type="chain" id="PRO_0000004731" description="Antibacterial protein PR-39">
    <location>
        <begin position="131"/>
        <end position="169"/>
    </location>
</feature>
<feature type="region of interest" description="Disordered" evidence="4">
    <location>
        <begin position="61"/>
        <end position="80"/>
    </location>
</feature>
<feature type="region of interest" description="Disordered" evidence="4">
    <location>
        <begin position="130"/>
        <end position="172"/>
    </location>
</feature>
<feature type="compositionally biased region" description="Pro residues" evidence="4">
    <location>
        <begin position="136"/>
        <end position="172"/>
    </location>
</feature>
<feature type="modified residue" description="Pyrrolidone carboxylic acid" evidence="2">
    <location>
        <position position="30"/>
    </location>
</feature>
<feature type="modified residue" description="Proline amide" evidence="6">
    <location>
        <position position="169"/>
    </location>
</feature>
<feature type="disulfide bond" evidence="1">
    <location>
        <begin position="85"/>
        <end position="96"/>
    </location>
</feature>
<feature type="disulfide bond" evidence="1">
    <location>
        <begin position="107"/>
        <end position="124"/>
    </location>
</feature>
<feature type="sequence conflict" description="In Ref. 2; AAA31109." evidence="8" ref="2">
    <original>G</original>
    <variation>A</variation>
    <location>
        <position position="21"/>
    </location>
</feature>
<feature type="sequence conflict" description="In Ref. 1; CAA60682." evidence="8" ref="1">
    <original>A</original>
    <variation>T</variation>
    <location>
        <position position="29"/>
    </location>
</feature>
<feature type="sequence conflict" description="In Ref. 1; CAA60682." evidence="8" ref="1">
    <original>RQ</original>
    <variation>QR</variation>
    <location>
        <begin position="90"/>
        <end position="91"/>
    </location>
</feature>
<feature type="sequence conflict" description="In Ref. 1; CAA60682." evidence="8" ref="1">
    <original>IHS</original>
    <variation>NDP</variation>
    <location>
        <begin position="117"/>
        <end position="119"/>
    </location>
</feature>
<feature type="sequence conflict" description="In Ref. 5; AA sequence." evidence="8" ref="5">
    <original>P</original>
    <variation>I</variation>
    <location>
        <position position="157"/>
    </location>
</feature>
<name>PR39_PIG</name>
<sequence>METQRASLCLGRWSLWLLLLGLVVPSASAQALSYREAVLRAVDRLNEQSSEANLYRLLELDQPPKADEDPGTPKPVSFTVKETVCPRPTRQPPELCDFKENGRVKQCVGTVTLNPSIHSLDISCNEIQSVRRRPRPPYLPRPRPPPFFPPRLPPRIPPGFPPRFPPRFPGKR</sequence>
<accession>P80054</accession>
<accession>Q9TR84</accession>
<keyword id="KW-0002">3D-structure</keyword>
<keyword id="KW-0027">Amidation</keyword>
<keyword id="KW-0044">Antibiotic</keyword>
<keyword id="KW-0929">Antimicrobial</keyword>
<keyword id="KW-0903">Direct protein sequencing</keyword>
<keyword id="KW-1015">Disulfide bond</keyword>
<keyword id="KW-0873">Pyrrolidone carboxylic acid</keyword>
<keyword id="KW-1185">Reference proteome</keyword>
<keyword id="KW-0964">Secreted</keyword>
<keyword id="KW-0732">Signal</keyword>
<dbReference type="EMBL" id="X87236">
    <property type="protein sequence ID" value="CAA60682.1"/>
    <property type="molecule type" value="Genomic_DNA"/>
</dbReference>
<dbReference type="EMBL" id="L23825">
    <property type="protein sequence ID" value="AAA31109.1"/>
    <property type="molecule type" value="mRNA"/>
</dbReference>
<dbReference type="EMBL" id="X89201">
    <property type="protein sequence ID" value="CAA61487.1"/>
    <property type="molecule type" value="Genomic_DNA"/>
</dbReference>
<dbReference type="PIR" id="S68232">
    <property type="entry name" value="S68232"/>
</dbReference>
<dbReference type="RefSeq" id="NP_999615.1">
    <property type="nucleotide sequence ID" value="NM_214450.1"/>
</dbReference>
<dbReference type="PDB" id="4EZO">
    <property type="method" value="X-ray"/>
    <property type="resolution" value="1.90 A"/>
    <property type="chains" value="C/D=131-145"/>
</dbReference>
<dbReference type="PDBsum" id="4EZO"/>
<dbReference type="SMR" id="P80054"/>
<dbReference type="BioGRID" id="1150284">
    <property type="interactions" value="3"/>
</dbReference>
<dbReference type="FunCoup" id="P80054">
    <property type="interactions" value="193"/>
</dbReference>
<dbReference type="PeptideAtlas" id="P80054"/>
<dbReference type="Ensembl" id="ENSSSCT00070010353.1">
    <property type="protein sequence ID" value="ENSSSCP00070008501.1"/>
    <property type="gene ID" value="ENSSSCG00070005376.1"/>
</dbReference>
<dbReference type="Ensembl" id="ENSSSCT00070021946.1">
    <property type="protein sequence ID" value="ENSSSCP00070018179.1"/>
    <property type="gene ID" value="ENSSSCG00070011269.1"/>
</dbReference>
<dbReference type="Ensembl" id="ENSSSCT00105076446">
    <property type="protein sequence ID" value="ENSSSCP00105054139"/>
    <property type="gene ID" value="ENSSSCG00105040076"/>
</dbReference>
<dbReference type="GeneID" id="407610"/>
<dbReference type="KEGG" id="ssc:407610"/>
<dbReference type="CTD" id="407610"/>
<dbReference type="InParanoid" id="P80054"/>
<dbReference type="OrthoDB" id="9930485at2759"/>
<dbReference type="EvolutionaryTrace" id="P80054"/>
<dbReference type="Proteomes" id="UP000008227">
    <property type="component" value="Unplaced"/>
</dbReference>
<dbReference type="Proteomes" id="UP000314985">
    <property type="component" value="Unassembled WGS sequence"/>
</dbReference>
<dbReference type="Proteomes" id="UP000694570">
    <property type="component" value="Unplaced"/>
</dbReference>
<dbReference type="Proteomes" id="UP000694571">
    <property type="component" value="Unplaced"/>
</dbReference>
<dbReference type="Proteomes" id="UP000694720">
    <property type="component" value="Unplaced"/>
</dbReference>
<dbReference type="Proteomes" id="UP000694722">
    <property type="component" value="Unplaced"/>
</dbReference>
<dbReference type="Proteomes" id="UP000694723">
    <property type="component" value="Unplaced"/>
</dbReference>
<dbReference type="Proteomes" id="UP000694724">
    <property type="component" value="Unplaced"/>
</dbReference>
<dbReference type="Proteomes" id="UP000694725">
    <property type="component" value="Unplaced"/>
</dbReference>
<dbReference type="Proteomes" id="UP000694726">
    <property type="component" value="Unplaced"/>
</dbReference>
<dbReference type="Proteomes" id="UP000694727">
    <property type="component" value="Unplaced"/>
</dbReference>
<dbReference type="Proteomes" id="UP000694728">
    <property type="component" value="Unplaced"/>
</dbReference>
<dbReference type="GO" id="GO:0005615">
    <property type="term" value="C:extracellular space"/>
    <property type="evidence" value="ECO:0000318"/>
    <property type="project" value="GO_Central"/>
</dbReference>
<dbReference type="GO" id="GO:0001530">
    <property type="term" value="F:lipopolysaccharide binding"/>
    <property type="evidence" value="ECO:0000318"/>
    <property type="project" value="GO_Central"/>
</dbReference>
<dbReference type="GO" id="GO:0061844">
    <property type="term" value="P:antimicrobial humoral immune response mediated by antimicrobial peptide"/>
    <property type="evidence" value="ECO:0000318"/>
    <property type="project" value="GO_Central"/>
</dbReference>
<dbReference type="GO" id="GO:0050829">
    <property type="term" value="P:defense response to Gram-negative bacterium"/>
    <property type="evidence" value="ECO:0000318"/>
    <property type="project" value="GO_Central"/>
</dbReference>
<dbReference type="GO" id="GO:0050830">
    <property type="term" value="P:defense response to Gram-positive bacterium"/>
    <property type="evidence" value="ECO:0000318"/>
    <property type="project" value="GO_Central"/>
</dbReference>
<dbReference type="GO" id="GO:0045087">
    <property type="term" value="P:innate immune response"/>
    <property type="evidence" value="ECO:0000318"/>
    <property type="project" value="GO_Central"/>
</dbReference>
<dbReference type="FunFam" id="3.10.450.10:FF:000003">
    <property type="entry name" value="Cathelicidin antimicrobial peptide"/>
    <property type="match status" value="1"/>
</dbReference>
<dbReference type="Gene3D" id="3.10.450.10">
    <property type="match status" value="1"/>
</dbReference>
<dbReference type="InterPro" id="IPR001894">
    <property type="entry name" value="Cathelicidin-like"/>
</dbReference>
<dbReference type="InterPro" id="IPR018216">
    <property type="entry name" value="Cathelicidin_CS"/>
</dbReference>
<dbReference type="InterPro" id="IPR046350">
    <property type="entry name" value="Cystatin_sf"/>
</dbReference>
<dbReference type="PANTHER" id="PTHR10206">
    <property type="entry name" value="CATHELICIDIN"/>
    <property type="match status" value="1"/>
</dbReference>
<dbReference type="PANTHER" id="PTHR10206:SF2">
    <property type="entry name" value="CATHELICIDIN ANTIMICROBIAL PEPTIDE"/>
    <property type="match status" value="1"/>
</dbReference>
<dbReference type="Pfam" id="PF00666">
    <property type="entry name" value="Cathelicidins"/>
    <property type="match status" value="1"/>
</dbReference>
<dbReference type="SUPFAM" id="SSF54403">
    <property type="entry name" value="Cystatin/monellin"/>
    <property type="match status" value="1"/>
</dbReference>
<dbReference type="PROSITE" id="PS00946">
    <property type="entry name" value="CATHELICIDINS_1"/>
    <property type="match status" value="1"/>
</dbReference>
<dbReference type="PROSITE" id="PS00947">
    <property type="entry name" value="CATHELICIDINS_2"/>
    <property type="match status" value="1"/>
</dbReference>
<gene>
    <name type="primary">PR39</name>
</gene>
<comment type="function">
    <text evidence="7">Exerts a potent antimicrobial activity against both E.coli and B.megaterium.</text>
</comment>
<comment type="subcellular location">
    <subcellularLocation>
        <location>Secreted</location>
    </subcellularLocation>
</comment>
<comment type="tissue specificity">
    <text>Small intestine and bone marrow.</text>
</comment>
<comment type="similarity">
    <text evidence="8">Belongs to the cathelicidin family.</text>
</comment>
<proteinExistence type="evidence at protein level"/>
<evidence type="ECO:0000250" key="1"/>
<evidence type="ECO:0000250" key="2">
    <source>
        <dbReference type="UniProtKB" id="P19660"/>
    </source>
</evidence>
<evidence type="ECO:0000255" key="3"/>
<evidence type="ECO:0000256" key="4">
    <source>
        <dbReference type="SAM" id="MobiDB-lite"/>
    </source>
</evidence>
<evidence type="ECO:0000269" key="5">
    <source>
    </source>
</evidence>
<evidence type="ECO:0000269" key="6">
    <source>
    </source>
</evidence>
<evidence type="ECO:0000269" key="7">
    <source>
    </source>
</evidence>
<evidence type="ECO:0000305" key="8"/>
<organism>
    <name type="scientific">Sus scrofa</name>
    <name type="common">Pig</name>
    <dbReference type="NCBI Taxonomy" id="9823"/>
    <lineage>
        <taxon>Eukaryota</taxon>
        <taxon>Metazoa</taxon>
        <taxon>Chordata</taxon>
        <taxon>Craniata</taxon>
        <taxon>Vertebrata</taxon>
        <taxon>Euteleostomi</taxon>
        <taxon>Mammalia</taxon>
        <taxon>Eutheria</taxon>
        <taxon>Laurasiatheria</taxon>
        <taxon>Artiodactyla</taxon>
        <taxon>Suina</taxon>
        <taxon>Suidae</taxon>
        <taxon>Sus</taxon>
    </lineage>
</organism>
<reference key="1">
    <citation type="journal article" date="1995" name="Proc. Natl. Acad. Sci. U.S.A.">
        <title>Structure of the gene for porcine peptide antibiotic PR-39, a cathelin gene family member: comparative mapping of the locus for the human peptide antibiotic FALL-39.</title>
        <authorList>
            <person name="Gudmundsson G.H."/>
            <person name="Magnusson K.P."/>
            <person name="Chowdhary B.P."/>
            <person name="Johansson M."/>
            <person name="Andersson L."/>
            <person name="Boman H.G."/>
        </authorList>
    </citation>
    <scope>NUCLEOTIDE SEQUENCE [GENOMIC DNA]</scope>
    <scope>AMIDATION AT PRO-169</scope>
</reference>
<reference key="2">
    <citation type="journal article" date="1993" name="Biochem. Biophys. Res. Commun.">
        <title>A cDNA derived from pig bone marrow cells predicts a sequence identical to the intestinal antibacterial peptide PR-39.</title>
        <authorList>
            <person name="Storici P."/>
            <person name="Zanetti M."/>
        </authorList>
    </citation>
    <scope>NUCLEOTIDE SEQUENCE [MRNA]</scope>
    <source>
        <tissue>Bone marrow</tissue>
    </source>
</reference>
<reference key="3">
    <citation type="journal article" date="1995" name="FEBS Lett.">
        <title>Structures of genes for two cathelin-associated antimicrobial peptides: prophenin-2 and PR-39.</title>
        <authorList>
            <person name="Zhao C."/>
            <person name="Ganz T."/>
            <person name="Lehrer R.I."/>
        </authorList>
    </citation>
    <scope>NUCLEOTIDE SEQUENCE [GENOMIC DNA]</scope>
    <source>
        <tissue>Liver</tissue>
    </source>
</reference>
<reference key="4">
    <citation type="journal article" date="1991" name="Eur. J. Biochem.">
        <title>Amino acid sequence of PR-39. Isolation from pig intestine of a new member of the family of proline-arginine-rich antibacterial peptides.</title>
        <authorList>
            <person name="Agerberth B."/>
            <person name="Lee J.-Y."/>
            <person name="Bergman T."/>
            <person name="Carlquist M."/>
            <person name="Boman H.G."/>
            <person name="Mutt V."/>
            <person name="Joernvall H."/>
        </authorList>
    </citation>
    <scope>PROTEIN SEQUENCE OF 131-169</scope>
    <source>
        <tissue>Intestine</tissue>
    </source>
</reference>
<reference key="5">
    <citation type="journal article" date="1994" name="J. Leukoc. Biol.">
        <title>Identification of a proline-arginine-rich antibacterial peptide from neutrophils that is analogous to PR-39, an antibacterial peptide from the small intestine.</title>
        <authorList>
            <person name="Shi J."/>
            <person name="Ross C.R."/>
            <person name="Chengappa M.M."/>
            <person name="Blecha F."/>
        </authorList>
    </citation>
    <scope>PROTEIN SEQUENCE OF 131-164</scope>
    <scope>FUNCTION</scope>
    <source>
        <tissue>Neutrophil</tissue>
    </source>
</reference>